<gene>
    <name evidence="1" type="primary">mutS</name>
    <name type="ordered locus">MXAN_3897</name>
</gene>
<sequence length="893" mass="96423">MNEGAGAREIASLTPMMRQYMEVKALHPDSLLFFRLGDFYEMFFEDAVKASEILQITLTARSKGADKVPMCGVPYHAARRYIGRLVSEGLKVAICEQVEEPGNGPGIVRREVTRVITPGMVLDEEVLEPQASNFLAAVSWNDKGWGAALLEASTGEFMALEAPGIAELAESLSRVEPRELLVPDGKRDAPEVAQLLARLVRTPAVAEGEAASFEPTRAAGYLRSHFAVQSLSAFGLDDAPLAAGAAGAALRYLKDTQKTAAAHVDRLSRQERGGNLLMDESSRANLEVLRSLRDGGRKGSLLGVLDKTVTSLGARKLARWLASPLGSLPEIHARLDAVEELSGRSVWREELAGILKEVGDLERLCGRLSLGAGNARDLRALGLSLAQLPRVVAVLARCESPLLKSLTGPLSALPELAELLSRAVAEEPPVTLKDGGMIRAGFHAELDKLVALSTSGKDLLLQIEQREKERTGISSLKVRYNKVFGYYLEVTKSNLDRVPKDYIRKQTTVNSERFVTPELKEYEEQVLTAEERRCALEIQLFEELRAQVVSAAPRIRSAAEAVATGDALLSFARCAAEYGYTRPEVDASVALSITAGRHPVVERMLGAGDSFVPNDVRLDPAEDAQLMVITGPNMAGKSTVMRQVALTALMAQAGSFVPAKAARIGLCDRIFTRVGAADNLARGQSTFMVEMTETSHILHHATNKSLIILDEIGRGTSTFDGLSIAWAVAEHLHDTVGARALFATHYHELVDLARERPRVKNLCVAVKEQNGKVIFLRKLVPGGASRSYGIEVAKLAGLPPEVVGRARELLQNLESGELDDAGRPRVAVRQPQGGRRGASTGQLGLFGMEPAQGGTGVTPAQQKALDALKGASIDRMTPLDALNLLAKLQRELE</sequence>
<protein>
    <recommendedName>
        <fullName evidence="1">DNA mismatch repair protein MutS</fullName>
    </recommendedName>
</protein>
<evidence type="ECO:0000255" key="1">
    <source>
        <dbReference type="HAMAP-Rule" id="MF_00096"/>
    </source>
</evidence>
<evidence type="ECO:0000256" key="2">
    <source>
        <dbReference type="SAM" id="MobiDB-lite"/>
    </source>
</evidence>
<comment type="function">
    <text evidence="1">This protein is involved in the repair of mismatches in DNA. It is possible that it carries out the mismatch recognition step. This protein has a weak ATPase activity.</text>
</comment>
<comment type="similarity">
    <text evidence="1">Belongs to the DNA mismatch repair MutS family.</text>
</comment>
<keyword id="KW-0067">ATP-binding</keyword>
<keyword id="KW-0227">DNA damage</keyword>
<keyword id="KW-0234">DNA repair</keyword>
<keyword id="KW-0238">DNA-binding</keyword>
<keyword id="KW-0547">Nucleotide-binding</keyword>
<keyword id="KW-1185">Reference proteome</keyword>
<dbReference type="EMBL" id="CP000113">
    <property type="protein sequence ID" value="ABF91440.1"/>
    <property type="molecule type" value="Genomic_DNA"/>
</dbReference>
<dbReference type="SMR" id="Q1D5J6"/>
<dbReference type="STRING" id="246197.MXAN_3897"/>
<dbReference type="EnsemblBacteria" id="ABF91440">
    <property type="protein sequence ID" value="ABF91440"/>
    <property type="gene ID" value="MXAN_3897"/>
</dbReference>
<dbReference type="KEGG" id="mxa:MXAN_3897"/>
<dbReference type="eggNOG" id="COG0249">
    <property type="taxonomic scope" value="Bacteria"/>
</dbReference>
<dbReference type="HOGENOM" id="CLU_002472_3_1_7"/>
<dbReference type="Proteomes" id="UP000002402">
    <property type="component" value="Chromosome"/>
</dbReference>
<dbReference type="GO" id="GO:0005829">
    <property type="term" value="C:cytosol"/>
    <property type="evidence" value="ECO:0007669"/>
    <property type="project" value="TreeGrafter"/>
</dbReference>
<dbReference type="GO" id="GO:0005524">
    <property type="term" value="F:ATP binding"/>
    <property type="evidence" value="ECO:0007669"/>
    <property type="project" value="UniProtKB-UniRule"/>
</dbReference>
<dbReference type="GO" id="GO:0140664">
    <property type="term" value="F:ATP-dependent DNA damage sensor activity"/>
    <property type="evidence" value="ECO:0007669"/>
    <property type="project" value="InterPro"/>
</dbReference>
<dbReference type="GO" id="GO:0003684">
    <property type="term" value="F:damaged DNA binding"/>
    <property type="evidence" value="ECO:0007669"/>
    <property type="project" value="UniProtKB-UniRule"/>
</dbReference>
<dbReference type="GO" id="GO:0030983">
    <property type="term" value="F:mismatched DNA binding"/>
    <property type="evidence" value="ECO:0007669"/>
    <property type="project" value="InterPro"/>
</dbReference>
<dbReference type="GO" id="GO:0006298">
    <property type="term" value="P:mismatch repair"/>
    <property type="evidence" value="ECO:0007669"/>
    <property type="project" value="UniProtKB-UniRule"/>
</dbReference>
<dbReference type="CDD" id="cd03284">
    <property type="entry name" value="ABC_MutS1"/>
    <property type="match status" value="1"/>
</dbReference>
<dbReference type="FunFam" id="3.40.1170.10:FF:000001">
    <property type="entry name" value="DNA mismatch repair protein MutS"/>
    <property type="match status" value="1"/>
</dbReference>
<dbReference type="FunFam" id="3.40.50.300:FF:000870">
    <property type="entry name" value="MutS protein homolog 4"/>
    <property type="match status" value="1"/>
</dbReference>
<dbReference type="Gene3D" id="1.10.1420.10">
    <property type="match status" value="2"/>
</dbReference>
<dbReference type="Gene3D" id="3.40.1170.10">
    <property type="entry name" value="DNA repair protein MutS, domain I"/>
    <property type="match status" value="1"/>
</dbReference>
<dbReference type="Gene3D" id="3.30.420.110">
    <property type="entry name" value="MutS, connector domain"/>
    <property type="match status" value="1"/>
</dbReference>
<dbReference type="Gene3D" id="3.40.50.300">
    <property type="entry name" value="P-loop containing nucleotide triphosphate hydrolases"/>
    <property type="match status" value="1"/>
</dbReference>
<dbReference type="HAMAP" id="MF_00096">
    <property type="entry name" value="MutS"/>
    <property type="match status" value="1"/>
</dbReference>
<dbReference type="InterPro" id="IPR005748">
    <property type="entry name" value="DNA_mismatch_repair_MutS"/>
</dbReference>
<dbReference type="InterPro" id="IPR007695">
    <property type="entry name" value="DNA_mismatch_repair_MutS-lik_N"/>
</dbReference>
<dbReference type="InterPro" id="IPR017261">
    <property type="entry name" value="DNA_mismatch_repair_MutS/MSH"/>
</dbReference>
<dbReference type="InterPro" id="IPR000432">
    <property type="entry name" value="DNA_mismatch_repair_MutS_C"/>
</dbReference>
<dbReference type="InterPro" id="IPR007861">
    <property type="entry name" value="DNA_mismatch_repair_MutS_clamp"/>
</dbReference>
<dbReference type="InterPro" id="IPR007696">
    <property type="entry name" value="DNA_mismatch_repair_MutS_core"/>
</dbReference>
<dbReference type="InterPro" id="IPR016151">
    <property type="entry name" value="DNA_mismatch_repair_MutS_N"/>
</dbReference>
<dbReference type="InterPro" id="IPR036187">
    <property type="entry name" value="DNA_mismatch_repair_MutS_sf"/>
</dbReference>
<dbReference type="InterPro" id="IPR007860">
    <property type="entry name" value="DNA_mmatch_repair_MutS_con_dom"/>
</dbReference>
<dbReference type="InterPro" id="IPR045076">
    <property type="entry name" value="MutS"/>
</dbReference>
<dbReference type="InterPro" id="IPR036678">
    <property type="entry name" value="MutS_con_dom_sf"/>
</dbReference>
<dbReference type="InterPro" id="IPR027417">
    <property type="entry name" value="P-loop_NTPase"/>
</dbReference>
<dbReference type="NCBIfam" id="TIGR01070">
    <property type="entry name" value="mutS1"/>
    <property type="match status" value="1"/>
</dbReference>
<dbReference type="NCBIfam" id="NF003810">
    <property type="entry name" value="PRK05399.1"/>
    <property type="match status" value="1"/>
</dbReference>
<dbReference type="PANTHER" id="PTHR11361:SF34">
    <property type="entry name" value="DNA MISMATCH REPAIR PROTEIN MSH1, MITOCHONDRIAL"/>
    <property type="match status" value="1"/>
</dbReference>
<dbReference type="PANTHER" id="PTHR11361">
    <property type="entry name" value="DNA MISMATCH REPAIR PROTEIN MUTS FAMILY MEMBER"/>
    <property type="match status" value="1"/>
</dbReference>
<dbReference type="Pfam" id="PF01624">
    <property type="entry name" value="MutS_I"/>
    <property type="match status" value="1"/>
</dbReference>
<dbReference type="Pfam" id="PF05188">
    <property type="entry name" value="MutS_II"/>
    <property type="match status" value="1"/>
</dbReference>
<dbReference type="Pfam" id="PF05192">
    <property type="entry name" value="MutS_III"/>
    <property type="match status" value="1"/>
</dbReference>
<dbReference type="Pfam" id="PF05190">
    <property type="entry name" value="MutS_IV"/>
    <property type="match status" value="1"/>
</dbReference>
<dbReference type="Pfam" id="PF00488">
    <property type="entry name" value="MutS_V"/>
    <property type="match status" value="1"/>
</dbReference>
<dbReference type="PIRSF" id="PIRSF037677">
    <property type="entry name" value="DNA_mis_repair_Msh6"/>
    <property type="match status" value="1"/>
</dbReference>
<dbReference type="SMART" id="SM00534">
    <property type="entry name" value="MUTSac"/>
    <property type="match status" value="1"/>
</dbReference>
<dbReference type="SMART" id="SM00533">
    <property type="entry name" value="MUTSd"/>
    <property type="match status" value="1"/>
</dbReference>
<dbReference type="SUPFAM" id="SSF55271">
    <property type="entry name" value="DNA repair protein MutS, domain I"/>
    <property type="match status" value="1"/>
</dbReference>
<dbReference type="SUPFAM" id="SSF53150">
    <property type="entry name" value="DNA repair protein MutS, domain II"/>
    <property type="match status" value="1"/>
</dbReference>
<dbReference type="SUPFAM" id="SSF48334">
    <property type="entry name" value="DNA repair protein MutS, domain III"/>
    <property type="match status" value="1"/>
</dbReference>
<dbReference type="SUPFAM" id="SSF52540">
    <property type="entry name" value="P-loop containing nucleoside triphosphate hydrolases"/>
    <property type="match status" value="1"/>
</dbReference>
<dbReference type="PROSITE" id="PS00486">
    <property type="entry name" value="DNA_MISMATCH_REPAIR_2"/>
    <property type="match status" value="1"/>
</dbReference>
<name>MUTS_MYXXD</name>
<proteinExistence type="inferred from homology"/>
<reference key="1">
    <citation type="journal article" date="2006" name="Proc. Natl. Acad. Sci. U.S.A.">
        <title>Evolution of sensory complexity recorded in a myxobacterial genome.</title>
        <authorList>
            <person name="Goldman B.S."/>
            <person name="Nierman W.C."/>
            <person name="Kaiser D."/>
            <person name="Slater S.C."/>
            <person name="Durkin A.S."/>
            <person name="Eisen J.A."/>
            <person name="Ronning C.M."/>
            <person name="Barbazuk W.B."/>
            <person name="Blanchard M."/>
            <person name="Field C."/>
            <person name="Halling C."/>
            <person name="Hinkle G."/>
            <person name="Iartchuk O."/>
            <person name="Kim H.S."/>
            <person name="Mackenzie C."/>
            <person name="Madupu R."/>
            <person name="Miller N."/>
            <person name="Shvartsbeyn A."/>
            <person name="Sullivan S.A."/>
            <person name="Vaudin M."/>
            <person name="Wiegand R."/>
            <person name="Kaplan H.B."/>
        </authorList>
    </citation>
    <scope>NUCLEOTIDE SEQUENCE [LARGE SCALE GENOMIC DNA]</scope>
    <source>
        <strain>DK1622</strain>
    </source>
</reference>
<accession>Q1D5J6</accession>
<feature type="chain" id="PRO_0000335184" description="DNA mismatch repair protein MutS">
    <location>
        <begin position="1"/>
        <end position="893"/>
    </location>
</feature>
<feature type="region of interest" description="Disordered" evidence="2">
    <location>
        <begin position="821"/>
        <end position="858"/>
    </location>
</feature>
<feature type="binding site" evidence="1">
    <location>
        <begin position="631"/>
        <end position="638"/>
    </location>
    <ligand>
        <name>ATP</name>
        <dbReference type="ChEBI" id="CHEBI:30616"/>
    </ligand>
</feature>
<organism>
    <name type="scientific">Myxococcus xanthus (strain DK1622)</name>
    <dbReference type="NCBI Taxonomy" id="246197"/>
    <lineage>
        <taxon>Bacteria</taxon>
        <taxon>Pseudomonadati</taxon>
        <taxon>Myxococcota</taxon>
        <taxon>Myxococcia</taxon>
        <taxon>Myxococcales</taxon>
        <taxon>Cystobacterineae</taxon>
        <taxon>Myxococcaceae</taxon>
        <taxon>Myxococcus</taxon>
    </lineage>
</organism>